<proteinExistence type="inferred from homology"/>
<dbReference type="EC" id="2.5.1.6" evidence="1"/>
<dbReference type="EMBL" id="AM946015">
    <property type="protein sequence ID" value="CAR42653.1"/>
    <property type="molecule type" value="Genomic_DNA"/>
</dbReference>
<dbReference type="RefSeq" id="WP_012658689.1">
    <property type="nucleotide sequence ID" value="NC_012004.1"/>
</dbReference>
<dbReference type="SMR" id="B9DSM6"/>
<dbReference type="STRING" id="218495.SUB1211"/>
<dbReference type="GeneID" id="93826481"/>
<dbReference type="KEGG" id="sub:SUB1211"/>
<dbReference type="eggNOG" id="COG0192">
    <property type="taxonomic scope" value="Bacteria"/>
</dbReference>
<dbReference type="HOGENOM" id="CLU_041802_1_1_9"/>
<dbReference type="OrthoDB" id="9801686at2"/>
<dbReference type="UniPathway" id="UPA00315">
    <property type="reaction ID" value="UER00080"/>
</dbReference>
<dbReference type="Proteomes" id="UP000000449">
    <property type="component" value="Chromosome"/>
</dbReference>
<dbReference type="GO" id="GO:0005737">
    <property type="term" value="C:cytoplasm"/>
    <property type="evidence" value="ECO:0007669"/>
    <property type="project" value="UniProtKB-SubCell"/>
</dbReference>
<dbReference type="GO" id="GO:0005524">
    <property type="term" value="F:ATP binding"/>
    <property type="evidence" value="ECO:0007669"/>
    <property type="project" value="UniProtKB-UniRule"/>
</dbReference>
<dbReference type="GO" id="GO:0000287">
    <property type="term" value="F:magnesium ion binding"/>
    <property type="evidence" value="ECO:0007669"/>
    <property type="project" value="UniProtKB-UniRule"/>
</dbReference>
<dbReference type="GO" id="GO:0004478">
    <property type="term" value="F:methionine adenosyltransferase activity"/>
    <property type="evidence" value="ECO:0007669"/>
    <property type="project" value="UniProtKB-UniRule"/>
</dbReference>
<dbReference type="GO" id="GO:0006730">
    <property type="term" value="P:one-carbon metabolic process"/>
    <property type="evidence" value="ECO:0007669"/>
    <property type="project" value="UniProtKB-KW"/>
</dbReference>
<dbReference type="GO" id="GO:0006556">
    <property type="term" value="P:S-adenosylmethionine biosynthetic process"/>
    <property type="evidence" value="ECO:0007669"/>
    <property type="project" value="UniProtKB-UniRule"/>
</dbReference>
<dbReference type="CDD" id="cd18079">
    <property type="entry name" value="S-AdoMet_synt"/>
    <property type="match status" value="1"/>
</dbReference>
<dbReference type="FunFam" id="3.30.300.10:FF:000003">
    <property type="entry name" value="S-adenosylmethionine synthase"/>
    <property type="match status" value="1"/>
</dbReference>
<dbReference type="Gene3D" id="3.30.300.10">
    <property type="match status" value="3"/>
</dbReference>
<dbReference type="HAMAP" id="MF_00086">
    <property type="entry name" value="S_AdoMet_synth1"/>
    <property type="match status" value="1"/>
</dbReference>
<dbReference type="InterPro" id="IPR022631">
    <property type="entry name" value="ADOMET_SYNTHASE_CS"/>
</dbReference>
<dbReference type="InterPro" id="IPR022630">
    <property type="entry name" value="S-AdoMet_synt_C"/>
</dbReference>
<dbReference type="InterPro" id="IPR022629">
    <property type="entry name" value="S-AdoMet_synt_central"/>
</dbReference>
<dbReference type="InterPro" id="IPR022628">
    <property type="entry name" value="S-AdoMet_synt_N"/>
</dbReference>
<dbReference type="InterPro" id="IPR002133">
    <property type="entry name" value="S-AdoMet_synthetase"/>
</dbReference>
<dbReference type="InterPro" id="IPR022636">
    <property type="entry name" value="S-AdoMet_synthetase_sfam"/>
</dbReference>
<dbReference type="NCBIfam" id="TIGR01034">
    <property type="entry name" value="metK"/>
    <property type="match status" value="1"/>
</dbReference>
<dbReference type="PANTHER" id="PTHR11964">
    <property type="entry name" value="S-ADENOSYLMETHIONINE SYNTHETASE"/>
    <property type="match status" value="1"/>
</dbReference>
<dbReference type="Pfam" id="PF02773">
    <property type="entry name" value="S-AdoMet_synt_C"/>
    <property type="match status" value="1"/>
</dbReference>
<dbReference type="Pfam" id="PF02772">
    <property type="entry name" value="S-AdoMet_synt_M"/>
    <property type="match status" value="1"/>
</dbReference>
<dbReference type="Pfam" id="PF00438">
    <property type="entry name" value="S-AdoMet_synt_N"/>
    <property type="match status" value="1"/>
</dbReference>
<dbReference type="PIRSF" id="PIRSF000497">
    <property type="entry name" value="MAT"/>
    <property type="match status" value="1"/>
</dbReference>
<dbReference type="SUPFAM" id="SSF55973">
    <property type="entry name" value="S-adenosylmethionine synthetase"/>
    <property type="match status" value="3"/>
</dbReference>
<dbReference type="PROSITE" id="PS00376">
    <property type="entry name" value="ADOMET_SYNTHASE_1"/>
    <property type="match status" value="1"/>
</dbReference>
<dbReference type="PROSITE" id="PS00377">
    <property type="entry name" value="ADOMET_SYNTHASE_2"/>
    <property type="match status" value="1"/>
</dbReference>
<sequence length="395" mass="42938">MSERKLFTSESVSEGHPDKIADQISDAILDAILAEDPEAHVAAETVVYTGSVHVFGEISTSAYVDINRVVRDTIAEIGYTNAEYGFSANSVGVHPSLVEQSTDIAQGVNEALEAREGQKDDLNLIGAGDQGLMFGFAIDETPELMPLPISLSHKLVKKLADLRKSGDITYLRPDAKSQVTVEYDDNDQPVRVDTVVISTQHDPEVSQETIRHDVIEKVIKEVIPTSFIDDNTKYFINPTGRFVIGGPQGDSGLTGRKIIVDTYGGYSRHGGGAFSGKDATKVDRSASYAARYIAKNIVAAGLAKKAEVQLAYAIGVAQPVSVRIDTFGTSTVSETDIEKAVRQLFDLRPAGIIKMLDLKRPIYKQTAAYGHMGRTDIDLPWEKLDKVEALKQLIG</sequence>
<evidence type="ECO:0000255" key="1">
    <source>
        <dbReference type="HAMAP-Rule" id="MF_00086"/>
    </source>
</evidence>
<keyword id="KW-0067">ATP-binding</keyword>
<keyword id="KW-0963">Cytoplasm</keyword>
<keyword id="KW-0460">Magnesium</keyword>
<keyword id="KW-0479">Metal-binding</keyword>
<keyword id="KW-0547">Nucleotide-binding</keyword>
<keyword id="KW-0554">One-carbon metabolism</keyword>
<keyword id="KW-0630">Potassium</keyword>
<keyword id="KW-1185">Reference proteome</keyword>
<keyword id="KW-0808">Transferase</keyword>
<name>METK_STRU0</name>
<feature type="chain" id="PRO_1000196733" description="S-adenosylmethionine synthase">
    <location>
        <begin position="1"/>
        <end position="395"/>
    </location>
</feature>
<feature type="region of interest" description="Flexible loop" evidence="1">
    <location>
        <begin position="100"/>
        <end position="110"/>
    </location>
</feature>
<feature type="binding site" description="in other chain" evidence="1">
    <location>
        <position position="16"/>
    </location>
    <ligand>
        <name>ATP</name>
        <dbReference type="ChEBI" id="CHEBI:30616"/>
        <note>ligand shared between two neighboring subunits</note>
    </ligand>
</feature>
<feature type="binding site" evidence="1">
    <location>
        <position position="18"/>
    </location>
    <ligand>
        <name>Mg(2+)</name>
        <dbReference type="ChEBI" id="CHEBI:18420"/>
    </ligand>
</feature>
<feature type="binding site" evidence="1">
    <location>
        <position position="44"/>
    </location>
    <ligand>
        <name>K(+)</name>
        <dbReference type="ChEBI" id="CHEBI:29103"/>
    </ligand>
</feature>
<feature type="binding site" description="in other chain" evidence="1">
    <location>
        <position position="57"/>
    </location>
    <ligand>
        <name>L-methionine</name>
        <dbReference type="ChEBI" id="CHEBI:57844"/>
        <note>ligand shared between two neighboring subunits</note>
    </ligand>
</feature>
<feature type="binding site" description="in other chain" evidence="1">
    <location>
        <position position="100"/>
    </location>
    <ligand>
        <name>L-methionine</name>
        <dbReference type="ChEBI" id="CHEBI:57844"/>
        <note>ligand shared between two neighboring subunits</note>
    </ligand>
</feature>
<feature type="binding site" description="in other chain" evidence="1">
    <location>
        <begin position="174"/>
        <end position="176"/>
    </location>
    <ligand>
        <name>ATP</name>
        <dbReference type="ChEBI" id="CHEBI:30616"/>
        <note>ligand shared between two neighboring subunits</note>
    </ligand>
</feature>
<feature type="binding site" description="in other chain" evidence="1">
    <location>
        <begin position="241"/>
        <end position="242"/>
    </location>
    <ligand>
        <name>ATP</name>
        <dbReference type="ChEBI" id="CHEBI:30616"/>
        <note>ligand shared between two neighboring subunits</note>
    </ligand>
</feature>
<feature type="binding site" evidence="1">
    <location>
        <position position="250"/>
    </location>
    <ligand>
        <name>ATP</name>
        <dbReference type="ChEBI" id="CHEBI:30616"/>
        <note>ligand shared between two neighboring subunits</note>
    </ligand>
</feature>
<feature type="binding site" evidence="1">
    <location>
        <position position="250"/>
    </location>
    <ligand>
        <name>L-methionine</name>
        <dbReference type="ChEBI" id="CHEBI:57844"/>
        <note>ligand shared between two neighboring subunits</note>
    </ligand>
</feature>
<feature type="binding site" description="in other chain" evidence="1">
    <location>
        <begin position="256"/>
        <end position="257"/>
    </location>
    <ligand>
        <name>ATP</name>
        <dbReference type="ChEBI" id="CHEBI:30616"/>
        <note>ligand shared between two neighboring subunits</note>
    </ligand>
</feature>
<feature type="binding site" evidence="1">
    <location>
        <position position="273"/>
    </location>
    <ligand>
        <name>ATP</name>
        <dbReference type="ChEBI" id="CHEBI:30616"/>
        <note>ligand shared between two neighboring subunits</note>
    </ligand>
</feature>
<feature type="binding site" evidence="1">
    <location>
        <position position="277"/>
    </location>
    <ligand>
        <name>ATP</name>
        <dbReference type="ChEBI" id="CHEBI:30616"/>
        <note>ligand shared between two neighboring subunits</note>
    </ligand>
</feature>
<feature type="binding site" description="in other chain" evidence="1">
    <location>
        <position position="281"/>
    </location>
    <ligand>
        <name>L-methionine</name>
        <dbReference type="ChEBI" id="CHEBI:57844"/>
        <note>ligand shared between two neighboring subunits</note>
    </ligand>
</feature>
<accession>B9DSM6</accession>
<organism>
    <name type="scientific">Streptococcus uberis (strain ATCC BAA-854 / 0140J)</name>
    <dbReference type="NCBI Taxonomy" id="218495"/>
    <lineage>
        <taxon>Bacteria</taxon>
        <taxon>Bacillati</taxon>
        <taxon>Bacillota</taxon>
        <taxon>Bacilli</taxon>
        <taxon>Lactobacillales</taxon>
        <taxon>Streptococcaceae</taxon>
        <taxon>Streptococcus</taxon>
    </lineage>
</organism>
<reference key="1">
    <citation type="journal article" date="2009" name="BMC Genomics">
        <title>Evidence for niche adaptation in the genome of the bovine pathogen Streptococcus uberis.</title>
        <authorList>
            <person name="Ward P.N."/>
            <person name="Holden M.T.G."/>
            <person name="Leigh J.A."/>
            <person name="Lennard N."/>
            <person name="Bignell A."/>
            <person name="Barron A."/>
            <person name="Clark L."/>
            <person name="Quail M.A."/>
            <person name="Woodward J."/>
            <person name="Barrell B.G."/>
            <person name="Egan S.A."/>
            <person name="Field T.R."/>
            <person name="Maskell D."/>
            <person name="Kehoe M."/>
            <person name="Dowson C.G."/>
            <person name="Chanter N."/>
            <person name="Whatmore A.M."/>
            <person name="Bentley S.D."/>
            <person name="Parkhill J."/>
        </authorList>
    </citation>
    <scope>NUCLEOTIDE SEQUENCE [LARGE SCALE GENOMIC DNA]</scope>
    <source>
        <strain>ATCC BAA-854 / 0140J</strain>
    </source>
</reference>
<protein>
    <recommendedName>
        <fullName evidence="1">S-adenosylmethionine synthase</fullName>
        <shortName evidence="1">AdoMet synthase</shortName>
        <ecNumber evidence="1">2.5.1.6</ecNumber>
    </recommendedName>
    <alternativeName>
        <fullName evidence="1">MAT</fullName>
    </alternativeName>
    <alternativeName>
        <fullName evidence="1">Methionine adenosyltransferase</fullName>
    </alternativeName>
</protein>
<gene>
    <name evidence="1" type="primary">metK</name>
    <name type="ordered locus">SUB1211</name>
</gene>
<comment type="function">
    <text evidence="1">Catalyzes the formation of S-adenosylmethionine (AdoMet) from methionine and ATP. The overall synthetic reaction is composed of two sequential steps, AdoMet formation and the subsequent tripolyphosphate hydrolysis which occurs prior to release of AdoMet from the enzyme.</text>
</comment>
<comment type="catalytic activity">
    <reaction evidence="1">
        <text>L-methionine + ATP + H2O = S-adenosyl-L-methionine + phosphate + diphosphate</text>
        <dbReference type="Rhea" id="RHEA:21080"/>
        <dbReference type="ChEBI" id="CHEBI:15377"/>
        <dbReference type="ChEBI" id="CHEBI:30616"/>
        <dbReference type="ChEBI" id="CHEBI:33019"/>
        <dbReference type="ChEBI" id="CHEBI:43474"/>
        <dbReference type="ChEBI" id="CHEBI:57844"/>
        <dbReference type="ChEBI" id="CHEBI:59789"/>
        <dbReference type="EC" id="2.5.1.6"/>
    </reaction>
</comment>
<comment type="cofactor">
    <cofactor evidence="1">
        <name>Mg(2+)</name>
        <dbReference type="ChEBI" id="CHEBI:18420"/>
    </cofactor>
    <text evidence="1">Binds 2 divalent ions per subunit.</text>
</comment>
<comment type="cofactor">
    <cofactor evidence="1">
        <name>K(+)</name>
        <dbReference type="ChEBI" id="CHEBI:29103"/>
    </cofactor>
    <text evidence="1">Binds 1 potassium ion per subunit.</text>
</comment>
<comment type="pathway">
    <text evidence="1">Amino-acid biosynthesis; S-adenosyl-L-methionine biosynthesis; S-adenosyl-L-methionine from L-methionine: step 1/1.</text>
</comment>
<comment type="subunit">
    <text evidence="1">Homotetramer; dimer of dimers.</text>
</comment>
<comment type="subcellular location">
    <subcellularLocation>
        <location evidence="1">Cytoplasm</location>
    </subcellularLocation>
</comment>
<comment type="similarity">
    <text evidence="1">Belongs to the AdoMet synthase family.</text>
</comment>